<sequence length="301" mass="34306">MLRLSAPGQLDDDLCLLGDVQVPVFLLRLGEASWALVEGGISRDAELVWADLCRWVADPSQVHYWLITHKHYDHCGLLPYLCPRLPNVQVLASERTCQAWKSESAVRVVERLNRQLLRAEQRLPEACAWDALPVRAVADGEWLELGPRHRLQVIEAHGHSDDHVVFYDVRRRRLFCGDALGEFDEAEGVWRPLVFDDMEAYLESLERLQRLPTLLQLIPGHGGLLRGRLAADGAESAYTECLRLCRRLLWRQSMGESLDELSEELHRAWGGQSVDFLPGELHLGSMRRMLEILSRQALPLD</sequence>
<accession>P20581</accession>
<comment type="function">
    <text evidence="5 6 7">Required for the biosynthesis of the quorum-sensing signaling molecules 2-heptyl-4(1H)-quinolone (HHQ) and 2-heptyl-3-hydroxy-4(1H)-quinolone (Pseudomonas quinolone signal or PQS), which are important for biofilm formation and virulence. Catalyzes the hydrolysis of the intermediate 2-aminobenzoylacetyl-CoA (2-ABA-CoA) to form 2-aminobenzoylacetate (2-ABA), the precursor of HHQ. In vitro, can also hydrolyze other substrates such as S-ethyl-acetothioacetate and acetoacetyl-CoA, but is inactive against anthraniloyl-CoA, malonyl-CoA and octanoyl-CoA (PubMed:25960261, PubMed:27082157). Beyond its thioesterase function, is involved in the regulation of diverse genes coding for key virulence determinants and biofilm development (PubMed:27851827).</text>
</comment>
<comment type="catalytic activity">
    <reaction evidence="5 6">
        <text>(2-aminobenzoyl)acetyl-CoA + H2O = (2-aminobenzoyl)acetate + CoA + H(+)</text>
        <dbReference type="Rhea" id="RHEA:49444"/>
        <dbReference type="ChEBI" id="CHEBI:15377"/>
        <dbReference type="ChEBI" id="CHEBI:15378"/>
        <dbReference type="ChEBI" id="CHEBI:57287"/>
        <dbReference type="ChEBI" id="CHEBI:131446"/>
        <dbReference type="ChEBI" id="CHEBI:131447"/>
        <dbReference type="EC" id="3.1.2.32"/>
    </reaction>
</comment>
<comment type="activity regulation">
    <text evidence="6">Thioesterase activity, but not pyocyanine production, is inhibited by 2-(pyridin-3-yl)benzoic acid, 2-(1H-pyrrol-1-yl)benzoic acid and 3-methylthiophene-2-carboxylic acid. Compounds bind to the active center.</text>
</comment>
<comment type="biophysicochemical properties">
    <kinetics>
        <KM evidence="5">4.4 mM for S-ethyl-acetothioacetate</KM>
        <KM evidence="5">2.5 mM for acetoacetyl-CoA</KM>
        <KM evidence="5">0.8 mM for cysteamine-S-phosphate</KM>
        <KM evidence="3">14 uM for S-(4-nitrobenzoyl)mercaptoethane</KM>
        <text evidence="3 5">kcat is 0.85 sec(-1) with S-ethyl-acetothioacetate as substrate. kcat is 0.36 sec(-1) with acetoacetyl-CoA as substrate. kcat is 0.022 sec(-1) with cysteamine-S-phosphate as substrate (PubMed:25960261). kcat is 7.2 min(-1) with S-(4-nitrobenzoyl)mercaptoethane as substrate (PubMed:19788310).</text>
    </kinetics>
</comment>
<comment type="disruption phenotype">
    <text evidence="1 2 5">Mutant is defective in pyocyanine and rhamnolipid production and fails to kill worms efficiently, but can still produce PQS (PubMed:12426334, PubMed:18776012). Deletion mutant produces increased levels of DHQ, resulting from intramolecular cyclization of 2-ABA-CoA (PubMed:25960261).</text>
</comment>
<comment type="miscellaneous">
    <text evidence="5 10 11">As mutant can produce wild-type levels of PQS, it was originally thought that PqsE is not involved in HHQ/PQS biosynthesis (PubMed:12426334, PubMed:18776012). It was shown later that the role of PqsE can be taken over to some extent by the broad-specificity thioesterase TesB, explaining why the pqsE deletion mutant still synthesizes HHQ and PQS (PubMed:25960261).</text>
</comment>
<comment type="similarity">
    <text evidence="9">Belongs to the metallo-beta-lactamase superfamily.</text>
</comment>
<protein>
    <recommendedName>
        <fullName evidence="9">2-aminobenzoylacetyl-CoA thioesterase</fullName>
        <ecNumber evidence="5 6">3.1.2.32</ecNumber>
    </recommendedName>
</protein>
<keyword id="KW-0002">3D-structure</keyword>
<keyword id="KW-0378">Hydrolase</keyword>
<keyword id="KW-0408">Iron</keyword>
<keyword id="KW-0479">Metal-binding</keyword>
<keyword id="KW-1185">Reference proteome</keyword>
<feature type="chain" id="PRO_0000206249" description="2-aminobenzoylacetyl-CoA thioesterase">
    <location>
        <begin position="1"/>
        <end position="301"/>
    </location>
</feature>
<feature type="binding site" evidence="3 4 6">
    <location>
        <position position="69"/>
    </location>
    <ligand>
        <name>Fe cation</name>
        <dbReference type="ChEBI" id="CHEBI:24875"/>
        <label>1</label>
    </ligand>
</feature>
<feature type="binding site" evidence="3 4 6">
    <location>
        <position position="71"/>
    </location>
    <ligand>
        <name>Fe cation</name>
        <dbReference type="ChEBI" id="CHEBI:24875"/>
        <label>1</label>
    </ligand>
</feature>
<feature type="binding site" evidence="3 4 6">
    <location>
        <position position="73"/>
    </location>
    <ligand>
        <name>Fe cation</name>
        <dbReference type="ChEBI" id="CHEBI:24875"/>
        <label>2</label>
    </ligand>
</feature>
<feature type="binding site" evidence="3 4 6">
    <location>
        <position position="74"/>
    </location>
    <ligand>
        <name>Fe cation</name>
        <dbReference type="ChEBI" id="CHEBI:24875"/>
        <label>2</label>
    </ligand>
</feature>
<feature type="binding site" evidence="3 4 6">
    <location>
        <position position="159"/>
    </location>
    <ligand>
        <name>Fe cation</name>
        <dbReference type="ChEBI" id="CHEBI:24875"/>
        <label>1</label>
    </ligand>
</feature>
<feature type="binding site" evidence="3 4 6">
    <location>
        <position position="178"/>
    </location>
    <ligand>
        <name>Fe cation</name>
        <dbReference type="ChEBI" id="CHEBI:24875"/>
        <label>1</label>
    </ligand>
</feature>
<feature type="binding site" evidence="3 4 6">
    <location>
        <position position="178"/>
    </location>
    <ligand>
        <name>Fe cation</name>
        <dbReference type="ChEBI" id="CHEBI:24875"/>
        <label>2</label>
    </ligand>
</feature>
<feature type="binding site" evidence="3 4 6">
    <location>
        <position position="221"/>
    </location>
    <ligand>
        <name>Fe cation</name>
        <dbReference type="ChEBI" id="CHEBI:24875"/>
        <label>2</label>
    </ligand>
</feature>
<feature type="mutagenesis site" description="Strong decrease in kcat with S-(4-nitrobenzoyl)mercaptoethane as substrate." evidence="3">
    <original>E</original>
    <variation>A</variation>
    <location>
        <position position="182"/>
    </location>
</feature>
<feature type="strand" evidence="21">
    <location>
        <begin position="2"/>
        <end position="4"/>
    </location>
</feature>
<feature type="strand" evidence="21">
    <location>
        <begin position="6"/>
        <end position="11"/>
    </location>
</feature>
<feature type="strand" evidence="21">
    <location>
        <begin position="14"/>
        <end position="18"/>
    </location>
</feature>
<feature type="strand" evidence="23">
    <location>
        <begin position="20"/>
        <end position="22"/>
    </location>
</feature>
<feature type="strand" evidence="21">
    <location>
        <begin position="24"/>
        <end position="30"/>
    </location>
</feature>
<feature type="strand" evidence="21">
    <location>
        <begin position="33"/>
        <end position="37"/>
    </location>
</feature>
<feature type="helix" evidence="21">
    <location>
        <begin position="42"/>
        <end position="44"/>
    </location>
</feature>
<feature type="helix" evidence="21">
    <location>
        <begin position="45"/>
        <end position="55"/>
    </location>
</feature>
<feature type="helix" evidence="21">
    <location>
        <begin position="59"/>
        <end position="61"/>
    </location>
</feature>
<feature type="strand" evidence="21">
    <location>
        <begin position="62"/>
        <end position="66"/>
    </location>
</feature>
<feature type="turn" evidence="21">
    <location>
        <begin position="72"/>
        <end position="77"/>
    </location>
</feature>
<feature type="helix" evidence="21">
    <location>
        <begin position="78"/>
        <end position="81"/>
    </location>
</feature>
<feature type="helix" evidence="21">
    <location>
        <begin position="82"/>
        <end position="84"/>
    </location>
</feature>
<feature type="strand" evidence="21">
    <location>
        <begin position="89"/>
        <end position="93"/>
    </location>
</feature>
<feature type="helix" evidence="21">
    <location>
        <begin position="94"/>
        <end position="99"/>
    </location>
</feature>
<feature type="helix" evidence="21">
    <location>
        <begin position="103"/>
        <end position="115"/>
    </location>
</feature>
<feature type="helix" evidence="21">
    <location>
        <begin position="129"/>
        <end position="131"/>
    </location>
</feature>
<feature type="strand" evidence="21">
    <location>
        <begin position="134"/>
        <end position="137"/>
    </location>
</feature>
<feature type="strand" evidence="21">
    <location>
        <begin position="142"/>
        <end position="146"/>
    </location>
</feature>
<feature type="strand" evidence="21">
    <location>
        <begin position="149"/>
        <end position="155"/>
    </location>
</feature>
<feature type="strand" evidence="20">
    <location>
        <begin position="158"/>
        <end position="160"/>
    </location>
</feature>
<feature type="strand" evidence="21">
    <location>
        <begin position="164"/>
        <end position="168"/>
    </location>
</feature>
<feature type="turn" evidence="21">
    <location>
        <begin position="169"/>
        <end position="172"/>
    </location>
</feature>
<feature type="strand" evidence="21">
    <location>
        <begin position="173"/>
        <end position="177"/>
    </location>
</feature>
<feature type="turn" evidence="21">
    <location>
        <begin position="178"/>
        <end position="180"/>
    </location>
</feature>
<feature type="strand" evidence="22">
    <location>
        <begin position="182"/>
        <end position="184"/>
    </location>
</feature>
<feature type="turn" evidence="21">
    <location>
        <begin position="185"/>
        <end position="187"/>
    </location>
</feature>
<feature type="strand" evidence="21">
    <location>
        <begin position="189"/>
        <end position="191"/>
    </location>
</feature>
<feature type="helix" evidence="21">
    <location>
        <begin position="198"/>
        <end position="209"/>
    </location>
</feature>
<feature type="strand" evidence="21">
    <location>
        <begin position="215"/>
        <end position="222"/>
    </location>
</feature>
<feature type="strand" evidence="21">
    <location>
        <begin position="224"/>
        <end position="226"/>
    </location>
</feature>
<feature type="helix" evidence="21">
    <location>
        <begin position="227"/>
        <end position="231"/>
    </location>
</feature>
<feature type="helix" evidence="21">
    <location>
        <begin position="233"/>
        <end position="253"/>
    </location>
</feature>
<feature type="helix" evidence="21">
    <location>
        <begin position="258"/>
        <end position="269"/>
    </location>
</feature>
<feature type="helix" evidence="21">
    <location>
        <begin position="270"/>
        <end position="273"/>
    </location>
</feature>
<feature type="turn" evidence="21">
    <location>
        <begin position="274"/>
        <end position="276"/>
    </location>
</feature>
<feature type="helix" evidence="21">
    <location>
        <begin position="279"/>
        <end position="296"/>
    </location>
</feature>
<gene>
    <name evidence="8" type="primary">pqsE</name>
    <name type="ordered locus">PA1000</name>
</gene>
<organism>
    <name type="scientific">Pseudomonas aeruginosa (strain ATCC 15692 / DSM 22644 / CIP 104116 / JCM 14847 / LMG 12228 / 1C / PRS 101 / PAO1)</name>
    <dbReference type="NCBI Taxonomy" id="208964"/>
    <lineage>
        <taxon>Bacteria</taxon>
        <taxon>Pseudomonadati</taxon>
        <taxon>Pseudomonadota</taxon>
        <taxon>Gammaproteobacteria</taxon>
        <taxon>Pseudomonadales</taxon>
        <taxon>Pseudomonadaceae</taxon>
        <taxon>Pseudomonas</taxon>
    </lineage>
</organism>
<name>PQSE_PSEAE</name>
<dbReference type="EC" id="3.1.2.32" evidence="5 6"/>
<dbReference type="EMBL" id="M33810">
    <property type="protein sequence ID" value="AAA88447.1"/>
    <property type="molecule type" value="Genomic_DNA"/>
</dbReference>
<dbReference type="EMBL" id="AE004091">
    <property type="protein sequence ID" value="AAG04389.1"/>
    <property type="molecule type" value="Genomic_DNA"/>
</dbReference>
<dbReference type="PIR" id="C35116">
    <property type="entry name" value="C35116"/>
</dbReference>
<dbReference type="RefSeq" id="NP_249691.1">
    <property type="nucleotide sequence ID" value="NC_002516.2"/>
</dbReference>
<dbReference type="RefSeq" id="WP_003086247.1">
    <property type="nucleotide sequence ID" value="NZ_QZGE01000006.1"/>
</dbReference>
<dbReference type="PDB" id="2Q0I">
    <property type="method" value="X-ray"/>
    <property type="resolution" value="1.57 A"/>
    <property type="chains" value="A=1-301"/>
</dbReference>
<dbReference type="PDB" id="2Q0J">
    <property type="method" value="X-ray"/>
    <property type="resolution" value="2.10 A"/>
    <property type="chains" value="A/B=1-301"/>
</dbReference>
<dbReference type="PDB" id="2VW8">
    <property type="method" value="X-ray"/>
    <property type="resolution" value="1.45 A"/>
    <property type="chains" value="A=1-301"/>
</dbReference>
<dbReference type="PDB" id="3DH8">
    <property type="method" value="X-ray"/>
    <property type="resolution" value="1.80 A"/>
    <property type="chains" value="A=1-301"/>
</dbReference>
<dbReference type="PDB" id="5HIO">
    <property type="method" value="X-ray"/>
    <property type="resolution" value="1.90 A"/>
    <property type="chains" value="A=1-301"/>
</dbReference>
<dbReference type="PDB" id="5HIP">
    <property type="method" value="X-ray"/>
    <property type="resolution" value="1.99 A"/>
    <property type="chains" value="A=1-301"/>
</dbReference>
<dbReference type="PDB" id="5HIQ">
    <property type="method" value="X-ray"/>
    <property type="resolution" value="2.10 A"/>
    <property type="chains" value="A=1-301"/>
</dbReference>
<dbReference type="PDB" id="5HIS">
    <property type="method" value="X-ray"/>
    <property type="resolution" value="1.77 A"/>
    <property type="chains" value="A=1-301"/>
</dbReference>
<dbReference type="PDB" id="7KGW">
    <property type="method" value="X-ray"/>
    <property type="resolution" value="1.99 A"/>
    <property type="chains" value="A=1-301"/>
</dbReference>
<dbReference type="PDB" id="7KGX">
    <property type="method" value="X-ray"/>
    <property type="resolution" value="2.00 A"/>
    <property type="chains" value="A=1-301"/>
</dbReference>
<dbReference type="PDB" id="7R3E">
    <property type="method" value="X-ray"/>
    <property type="resolution" value="3.46 A"/>
    <property type="chains" value="A/B=1-301"/>
</dbReference>
<dbReference type="PDB" id="7R3F">
    <property type="method" value="X-ray"/>
    <property type="resolution" value="1.65 A"/>
    <property type="chains" value="A=1-301"/>
</dbReference>
<dbReference type="PDB" id="7R3J">
    <property type="method" value="X-ray"/>
    <property type="resolution" value="3.06 A"/>
    <property type="chains" value="A/B=1-301"/>
</dbReference>
<dbReference type="PDB" id="8B4A">
    <property type="method" value="X-ray"/>
    <property type="resolution" value="3.06 A"/>
    <property type="chains" value="A/B=1-301"/>
</dbReference>
<dbReference type="PDB" id="8DQ0">
    <property type="method" value="EM"/>
    <property type="resolution" value="3.74 A"/>
    <property type="chains" value="A/B=1-301"/>
</dbReference>
<dbReference type="PDB" id="8DQ1">
    <property type="method" value="EM"/>
    <property type="resolution" value="4.10 A"/>
    <property type="chains" value="A/B=1-301"/>
</dbReference>
<dbReference type="PDBsum" id="2Q0I"/>
<dbReference type="PDBsum" id="2Q0J"/>
<dbReference type="PDBsum" id="2VW8"/>
<dbReference type="PDBsum" id="3DH8"/>
<dbReference type="PDBsum" id="5HIO"/>
<dbReference type="PDBsum" id="5HIP"/>
<dbReference type="PDBsum" id="5HIQ"/>
<dbReference type="PDBsum" id="5HIS"/>
<dbReference type="PDBsum" id="7KGW"/>
<dbReference type="PDBsum" id="7KGX"/>
<dbReference type="PDBsum" id="7R3E"/>
<dbReference type="PDBsum" id="7R3F"/>
<dbReference type="PDBsum" id="7R3J"/>
<dbReference type="PDBsum" id="8B4A"/>
<dbReference type="PDBsum" id="8DQ0"/>
<dbReference type="PDBsum" id="8DQ1"/>
<dbReference type="EMDB" id="EMD-27645"/>
<dbReference type="EMDB" id="EMD-27646"/>
<dbReference type="SMR" id="P20581"/>
<dbReference type="STRING" id="208964.PA1000"/>
<dbReference type="DrugBank" id="DB07418">
    <property type="generic name" value="bis(4-nitrophenyl) hydrogen phosphate"/>
</dbReference>
<dbReference type="PaxDb" id="208964-PA1000"/>
<dbReference type="GeneID" id="880721"/>
<dbReference type="KEGG" id="pae:PA1000"/>
<dbReference type="PATRIC" id="fig|208964.12.peg.1032"/>
<dbReference type="PseudoCAP" id="PA1000"/>
<dbReference type="HOGENOM" id="CLU_932776_0_0_6"/>
<dbReference type="InParanoid" id="P20581"/>
<dbReference type="OrthoDB" id="9815874at2"/>
<dbReference type="PhylomeDB" id="P20581"/>
<dbReference type="BioCyc" id="MetaCyc:MONOMER-19871"/>
<dbReference type="BioCyc" id="PAER208964:G1FZ6-1019-MONOMER"/>
<dbReference type="BRENDA" id="3.1.2.32">
    <property type="organism ID" value="5087"/>
</dbReference>
<dbReference type="EvolutionaryTrace" id="P20581"/>
<dbReference type="PHI-base" id="PHI:123488"/>
<dbReference type="PHI-base" id="PHI:9368"/>
<dbReference type="Proteomes" id="UP000002438">
    <property type="component" value="Chromosome"/>
</dbReference>
<dbReference type="GO" id="GO:0016787">
    <property type="term" value="F:hydrolase activity"/>
    <property type="evidence" value="ECO:0007669"/>
    <property type="project" value="UniProtKB-KW"/>
</dbReference>
<dbReference type="GO" id="GO:0046872">
    <property type="term" value="F:metal ion binding"/>
    <property type="evidence" value="ECO:0007669"/>
    <property type="project" value="UniProtKB-KW"/>
</dbReference>
<dbReference type="GO" id="GO:0044550">
    <property type="term" value="P:secondary metabolite biosynthetic process"/>
    <property type="evidence" value="ECO:0000315"/>
    <property type="project" value="PseudoCAP"/>
</dbReference>
<dbReference type="CDD" id="cd07725">
    <property type="entry name" value="TTHA1429-like_MBL-fold"/>
    <property type="match status" value="1"/>
</dbReference>
<dbReference type="FunFam" id="3.60.15.10:FF:000088">
    <property type="entry name" value="Quinolone signal response protein"/>
    <property type="match status" value="1"/>
</dbReference>
<dbReference type="Gene3D" id="3.60.15.10">
    <property type="entry name" value="Ribonuclease Z/Hydroxyacylglutathione hydrolase-like"/>
    <property type="match status" value="1"/>
</dbReference>
<dbReference type="InterPro" id="IPR001279">
    <property type="entry name" value="Metallo-B-lactamas"/>
</dbReference>
<dbReference type="InterPro" id="IPR050855">
    <property type="entry name" value="NDM-1-like"/>
</dbReference>
<dbReference type="InterPro" id="IPR036866">
    <property type="entry name" value="RibonucZ/Hydroxyglut_hydro"/>
</dbReference>
<dbReference type="PANTHER" id="PTHR42951">
    <property type="entry name" value="METALLO-BETA-LACTAMASE DOMAIN-CONTAINING"/>
    <property type="match status" value="1"/>
</dbReference>
<dbReference type="PANTHER" id="PTHR42951:SF17">
    <property type="entry name" value="METALLO-BETA-LACTAMASE DOMAIN-CONTAINING PROTEIN"/>
    <property type="match status" value="1"/>
</dbReference>
<dbReference type="Pfam" id="PF00753">
    <property type="entry name" value="Lactamase_B"/>
    <property type="match status" value="1"/>
</dbReference>
<dbReference type="SMART" id="SM00849">
    <property type="entry name" value="Lactamase_B"/>
    <property type="match status" value="1"/>
</dbReference>
<dbReference type="SUPFAM" id="SSF56281">
    <property type="entry name" value="Metallo-hydrolase/oxidoreductase"/>
    <property type="match status" value="1"/>
</dbReference>
<reference key="1">
    <citation type="journal article" date="1990" name="J. Bacteriol.">
        <title>Identification and characterization of genes for a second anthranilate synthase in Pseudomonas aeruginosa: interchangeability of the two anthranilate synthases and evolutionary implications.</title>
        <authorList>
            <person name="Essar D.W."/>
            <person name="Eberly L."/>
            <person name="Hadero A."/>
            <person name="Crawford I.P."/>
        </authorList>
    </citation>
    <scope>NUCLEOTIDE SEQUENCE [GENOMIC DNA]</scope>
    <source>
        <strain>ATCC 15692 / DSM 22644 / CIP 104116 / JCM 14847 / LMG 12228 / 1C / PRS 101 / PAO1</strain>
    </source>
</reference>
<reference key="2">
    <citation type="journal article" date="2000" name="Nature">
        <title>Complete genome sequence of Pseudomonas aeruginosa PAO1, an opportunistic pathogen.</title>
        <authorList>
            <person name="Stover C.K."/>
            <person name="Pham X.-Q.T."/>
            <person name="Erwin A.L."/>
            <person name="Mizoguchi S.D."/>
            <person name="Warrener P."/>
            <person name="Hickey M.J."/>
            <person name="Brinkman F.S.L."/>
            <person name="Hufnagle W.O."/>
            <person name="Kowalik D.J."/>
            <person name="Lagrou M."/>
            <person name="Garber R.L."/>
            <person name="Goltry L."/>
            <person name="Tolentino E."/>
            <person name="Westbrock-Wadman S."/>
            <person name="Yuan Y."/>
            <person name="Brody L.L."/>
            <person name="Coulter S.N."/>
            <person name="Folger K.R."/>
            <person name="Kas A."/>
            <person name="Larbig K."/>
            <person name="Lim R.M."/>
            <person name="Smith K.A."/>
            <person name="Spencer D.H."/>
            <person name="Wong G.K.-S."/>
            <person name="Wu Z."/>
            <person name="Paulsen I.T."/>
            <person name="Reizer J."/>
            <person name="Saier M.H. Jr."/>
            <person name="Hancock R.E.W."/>
            <person name="Lory S."/>
            <person name="Olson M.V."/>
        </authorList>
    </citation>
    <scope>NUCLEOTIDE SEQUENCE [LARGE SCALE GENOMIC DNA]</scope>
    <source>
        <strain>ATCC 15692 / DSM 22644 / CIP 104116 / JCM 14847 / LMG 12228 / 1C / PRS 101 / PAO1</strain>
    </source>
</reference>
<reference key="3">
    <citation type="journal article" date="2002" name="J. Bacteriol.">
        <title>Functions required for extracellular quinolone signaling by Pseudomonas aeruginosa.</title>
        <authorList>
            <person name="Gallagher L.A."/>
            <person name="McKnight S.L."/>
            <person name="Kuznetsova M.S."/>
            <person name="Pesci E.C."/>
            <person name="Manoil C."/>
        </authorList>
    </citation>
    <scope>DISRUPTION PHENOTYPE</scope>
    <source>
        <strain>ATCC 15692 / DSM 22644 / CIP 104116 / JCM 14847 / LMG 12228 / 1C / PRS 101 / PAO1</strain>
    </source>
</reference>
<reference key="4">
    <citation type="journal article" date="2008" name="J. Bacteriol.">
        <title>PqsE functions independently of PqsR-Pseudomonas quinolone signal and enhances the rhl quorum-sensing system.</title>
        <authorList>
            <person name="Farrow J.M. III"/>
            <person name="Sund Z.M."/>
            <person name="Ellison M.L."/>
            <person name="Wade D.S."/>
            <person name="Coleman J.P."/>
            <person name="Pesci E.C."/>
        </authorList>
    </citation>
    <scope>DISRUPTION PHENOTYPE</scope>
    <source>
        <strain>ATCC 15692 / DSM 22644 / CIP 104116 / JCM 14847 / LMG 12228 / 1C / PRS 101 / PAO1</strain>
    </source>
</reference>
<reference key="5">
    <citation type="journal article" date="2015" name="Chem. Biol.">
        <title>PqsE of Pseudomonas aeruginosa acts as pathway-specific thioesterase in the biosynthesis of alkylquinolone signaling molecules.</title>
        <authorList>
            <person name="Drees S.L."/>
            <person name="Fetzner S."/>
        </authorList>
    </citation>
    <scope>FUNCTION</scope>
    <scope>CATALYTIC ACTIVITY</scope>
    <scope>BIOPHYSICOCHEMICAL PROPERTIES</scope>
    <scope>DISRUPTION PHENOTYPE</scope>
    <source>
        <strain>ATCC 15692 / DSM 22644 / CIP 104116 / JCM 14847 / LMG 12228 / 1C / PRS 101 / PAO1</strain>
    </source>
</reference>
<reference key="6">
    <citation type="journal article" date="2016" name="PLoS Pathog.">
        <title>Unravelling the genome-wide contributions of specific 2-alkyl-4-quinolones and PqsE to quorum sensing in Pseudomonas aeruginosa.</title>
        <authorList>
            <person name="Rampioni G."/>
            <person name="Falcone M."/>
            <person name="Heeb S."/>
            <person name="Frangipani E."/>
            <person name="Fletcher M.P."/>
            <person name="Dubern J.F."/>
            <person name="Visca P."/>
            <person name="Leoni L."/>
            <person name="Camara M."/>
            <person name="Williams P."/>
        </authorList>
    </citation>
    <scope>FUNCTION</scope>
</reference>
<reference evidence="12 13 15" key="7">
    <citation type="journal article" date="2009" name="Biochemistry">
        <title>Structure elucidation and preliminary assessment of hydrolase activity of PqsE, the Pseudomonas quinolone signal (PQS) response protein.</title>
        <authorList>
            <person name="Yu S."/>
            <person name="Jensen V."/>
            <person name="Seeliger J."/>
            <person name="Feldmann I."/>
            <person name="Weber S."/>
            <person name="Schleicher E."/>
            <person name="Haussler S."/>
            <person name="Blankenfeldt W."/>
        </authorList>
    </citation>
    <scope>X-RAY CRYSTALLOGRAPHY (1.57 ANGSTROMS) IN COMPLEX WITH IRON</scope>
    <scope>FUNCTION AS AN HYDROLASE</scope>
    <scope>BIOPHYSICOCHEMICAL PROPERTIES</scope>
    <scope>MUTAGENESIS OF GLU-182</scope>
    <source>
        <strain>ATCC 15692 / DSM 22644 / CIP 104116 / JCM 14847 / LMG 12228 / 1C / PRS 101 / PAO1</strain>
    </source>
</reference>
<reference evidence="14" key="8">
    <citation type="journal article" date="2010" name="J. Struct. Funct. Genomics">
        <title>The Scottish Structural Proteomics Facility: targets, methods and outputs.</title>
        <authorList>
            <person name="Oke M."/>
            <person name="Carter L.G."/>
            <person name="Johnson K.A."/>
            <person name="Liu H."/>
            <person name="McMahon S.A."/>
            <person name="Yan X."/>
            <person name="Kerou M."/>
            <person name="Weikart N.D."/>
            <person name="Kadi N."/>
            <person name="Sheikh M.A."/>
            <person name="Schmelz S."/>
            <person name="Dorward M."/>
            <person name="Zawadzki M."/>
            <person name="Cozens C."/>
            <person name="Falconer H."/>
            <person name="Powers H."/>
            <person name="Overton I.M."/>
            <person name="van Niekerk C.A."/>
            <person name="Peng X."/>
            <person name="Patel P."/>
            <person name="Garrett R.A."/>
            <person name="Prangishvili D."/>
            <person name="Botting C.H."/>
            <person name="Coote P.J."/>
            <person name="Dryden D.T."/>
            <person name="Barton G.J."/>
            <person name="Schwarz-Linek U."/>
            <person name="Challis G.L."/>
            <person name="Taylor G.L."/>
            <person name="White M.F."/>
            <person name="Naismith J.H."/>
        </authorList>
    </citation>
    <scope>X-RAY CRYSTALLOGRAPHY (1.45 ANGSTROMS) IN COMPLEX WITH IRON</scope>
</reference>
<reference evidence="16 17 18 19" key="9">
    <citation type="journal article" date="2016" name="ACS Chem. Biol.">
        <title>Dissecting the multiple roles of PqsE in Pseudomonas aeruginosa virulence by discovery of small tool compounds.</title>
        <authorList>
            <person name="Zender M."/>
            <person name="Witzgall F."/>
            <person name="Drees S.L."/>
            <person name="Weidel E."/>
            <person name="Maurer C.K."/>
            <person name="Fetzner S."/>
            <person name="Blankenfeldt W."/>
            <person name="Empting M."/>
            <person name="Hartmann R.W."/>
        </authorList>
    </citation>
    <scope>X-RAY CRYSTALLOGRAPHY (1.77 ANGSTROMS) IN COMPLEXES WITH IRON AND INHIBITORS</scope>
    <scope>FUNCTION</scope>
    <scope>CATALYTIC ACTIVITY</scope>
    <scope>ACTIVITY REGULATION</scope>
    <source>
        <strain>ATCC 15692 / DSM 22644 / CIP 104116 / JCM 14847 / LMG 12228 / 1C / PRS 101 / PAO1</strain>
    </source>
</reference>
<evidence type="ECO:0000269" key="1">
    <source>
    </source>
</evidence>
<evidence type="ECO:0000269" key="2">
    <source>
    </source>
</evidence>
<evidence type="ECO:0000269" key="3">
    <source>
    </source>
</evidence>
<evidence type="ECO:0000269" key="4">
    <source>
    </source>
</evidence>
<evidence type="ECO:0000269" key="5">
    <source>
    </source>
</evidence>
<evidence type="ECO:0000269" key="6">
    <source>
    </source>
</evidence>
<evidence type="ECO:0000269" key="7">
    <source>
    </source>
</evidence>
<evidence type="ECO:0000303" key="8">
    <source>
    </source>
</evidence>
<evidence type="ECO:0000305" key="9"/>
<evidence type="ECO:0000305" key="10">
    <source>
    </source>
</evidence>
<evidence type="ECO:0000305" key="11">
    <source>
    </source>
</evidence>
<evidence type="ECO:0007744" key="12">
    <source>
        <dbReference type="PDB" id="2Q0I"/>
    </source>
</evidence>
<evidence type="ECO:0007744" key="13">
    <source>
        <dbReference type="PDB" id="2Q0J"/>
    </source>
</evidence>
<evidence type="ECO:0007744" key="14">
    <source>
        <dbReference type="PDB" id="2VW8"/>
    </source>
</evidence>
<evidence type="ECO:0007744" key="15">
    <source>
        <dbReference type="PDB" id="3DH8"/>
    </source>
</evidence>
<evidence type="ECO:0007744" key="16">
    <source>
        <dbReference type="PDB" id="5HIO"/>
    </source>
</evidence>
<evidence type="ECO:0007744" key="17">
    <source>
        <dbReference type="PDB" id="5HIP"/>
    </source>
</evidence>
<evidence type="ECO:0007744" key="18">
    <source>
        <dbReference type="PDB" id="5HIQ"/>
    </source>
</evidence>
<evidence type="ECO:0007744" key="19">
    <source>
        <dbReference type="PDB" id="5HIS"/>
    </source>
</evidence>
<evidence type="ECO:0007829" key="20">
    <source>
        <dbReference type="PDB" id="2Q0I"/>
    </source>
</evidence>
<evidence type="ECO:0007829" key="21">
    <source>
        <dbReference type="PDB" id="2VW8"/>
    </source>
</evidence>
<evidence type="ECO:0007829" key="22">
    <source>
        <dbReference type="PDB" id="7R3F"/>
    </source>
</evidence>
<evidence type="ECO:0007829" key="23">
    <source>
        <dbReference type="PDB" id="7R3J"/>
    </source>
</evidence>
<proteinExistence type="evidence at protein level"/>